<name>UVRC_CAMJD</name>
<sequence length="600" mass="69557">MTKEKLENELKTLPNSAGVYEYFNQEGKLLYVGKAKNLKNRVKSYFAFTPNLHANPGNSLRIQKMIQETVHLEFITTNSEADALILENSFIKQLHPKYNILLRDDKTYPYIYVDFKEEFPRFEITRKLVKKSKIKYFGPFFKGARELLDALYLYYPLKQKASCKSPCIFYQISRCLAPCDKRISKEKYREILDEAMHALLNPSVLLKNLEKQMLVLAQNENYEEAAKIRDQIATIKDLEVKVEIDIAKLEDFEVFALAFKNSMLSTLRFVVQNGKIISVNSKITPIKNDIQWDKNEIYKQLILENFSMDIPLLASVIYVYEEFEDRMLLEKILSQRFDKKISIKIPKIGEKRKICDLAFQNALLNIEKEQKNHDFTIQKELKSYFELENLPNDIEIFDNSHLQGVANVGAMVTYSVNSWDKSKYRKFHLKHKNDYDQMREVLTRRALDFDKIPPPDLWLIDGGKVLLDLAKEIILSTGANVDILAISKEKIDAKAHRAKGGAKDKIHSLKGEFSLSVNDKKLQFLQKLRDEAHRFAISFHQNTKKKQDLKSSKLANLGLSLGVIQKLLAYYGNFESIYKADFKDLAMLVGKKAAQKIKEN</sequence>
<dbReference type="EMBL" id="CP000768">
    <property type="protein sequence ID" value="ABS43226.1"/>
    <property type="molecule type" value="Genomic_DNA"/>
</dbReference>
<dbReference type="SMR" id="A7H2D5"/>
<dbReference type="KEGG" id="cjd:JJD26997_0480"/>
<dbReference type="HOGENOM" id="CLU_014841_3_2_7"/>
<dbReference type="Proteomes" id="UP000002302">
    <property type="component" value="Chromosome"/>
</dbReference>
<dbReference type="GO" id="GO:0005737">
    <property type="term" value="C:cytoplasm"/>
    <property type="evidence" value="ECO:0007669"/>
    <property type="project" value="UniProtKB-SubCell"/>
</dbReference>
<dbReference type="GO" id="GO:0009380">
    <property type="term" value="C:excinuclease repair complex"/>
    <property type="evidence" value="ECO:0007669"/>
    <property type="project" value="InterPro"/>
</dbReference>
<dbReference type="GO" id="GO:0003677">
    <property type="term" value="F:DNA binding"/>
    <property type="evidence" value="ECO:0007669"/>
    <property type="project" value="UniProtKB-UniRule"/>
</dbReference>
<dbReference type="GO" id="GO:0009381">
    <property type="term" value="F:excinuclease ABC activity"/>
    <property type="evidence" value="ECO:0007669"/>
    <property type="project" value="UniProtKB-UniRule"/>
</dbReference>
<dbReference type="GO" id="GO:0006289">
    <property type="term" value="P:nucleotide-excision repair"/>
    <property type="evidence" value="ECO:0007669"/>
    <property type="project" value="UniProtKB-UniRule"/>
</dbReference>
<dbReference type="GO" id="GO:0009432">
    <property type="term" value="P:SOS response"/>
    <property type="evidence" value="ECO:0007669"/>
    <property type="project" value="UniProtKB-UniRule"/>
</dbReference>
<dbReference type="CDD" id="cd10434">
    <property type="entry name" value="GIY-YIG_UvrC_Cho"/>
    <property type="match status" value="1"/>
</dbReference>
<dbReference type="FunFam" id="3.40.1440.10:FF:000001">
    <property type="entry name" value="UvrABC system protein C"/>
    <property type="match status" value="1"/>
</dbReference>
<dbReference type="Gene3D" id="3.40.1440.10">
    <property type="entry name" value="GIY-YIG endonuclease"/>
    <property type="match status" value="1"/>
</dbReference>
<dbReference type="Gene3D" id="4.10.860.10">
    <property type="entry name" value="UVR domain"/>
    <property type="match status" value="1"/>
</dbReference>
<dbReference type="Gene3D" id="3.30.420.340">
    <property type="entry name" value="UvrC, RNAse H endonuclease domain"/>
    <property type="match status" value="1"/>
</dbReference>
<dbReference type="HAMAP" id="MF_00203">
    <property type="entry name" value="UvrC"/>
    <property type="match status" value="1"/>
</dbReference>
<dbReference type="InterPro" id="IPR000305">
    <property type="entry name" value="GIY-YIG_endonuc"/>
</dbReference>
<dbReference type="InterPro" id="IPR035901">
    <property type="entry name" value="GIY-YIG_endonuc_sf"/>
</dbReference>
<dbReference type="InterPro" id="IPR047296">
    <property type="entry name" value="GIY-YIG_UvrC_Cho"/>
</dbReference>
<dbReference type="InterPro" id="IPR010994">
    <property type="entry name" value="RuvA_2-like"/>
</dbReference>
<dbReference type="InterPro" id="IPR001943">
    <property type="entry name" value="UVR_dom"/>
</dbReference>
<dbReference type="InterPro" id="IPR036876">
    <property type="entry name" value="UVR_dom_sf"/>
</dbReference>
<dbReference type="InterPro" id="IPR050066">
    <property type="entry name" value="UvrABC_protein_C"/>
</dbReference>
<dbReference type="InterPro" id="IPR004791">
    <property type="entry name" value="UvrC"/>
</dbReference>
<dbReference type="InterPro" id="IPR001162">
    <property type="entry name" value="UvrC_RNase_H_dom"/>
</dbReference>
<dbReference type="InterPro" id="IPR038476">
    <property type="entry name" value="UvrC_RNase_H_dom_sf"/>
</dbReference>
<dbReference type="NCBIfam" id="TIGR00194">
    <property type="entry name" value="uvrC"/>
    <property type="match status" value="1"/>
</dbReference>
<dbReference type="PANTHER" id="PTHR30562:SF1">
    <property type="entry name" value="UVRABC SYSTEM PROTEIN C"/>
    <property type="match status" value="1"/>
</dbReference>
<dbReference type="PANTHER" id="PTHR30562">
    <property type="entry name" value="UVRC/OXIDOREDUCTASE"/>
    <property type="match status" value="1"/>
</dbReference>
<dbReference type="Pfam" id="PF01541">
    <property type="entry name" value="GIY-YIG"/>
    <property type="match status" value="1"/>
</dbReference>
<dbReference type="Pfam" id="PF02151">
    <property type="entry name" value="UVR"/>
    <property type="match status" value="1"/>
</dbReference>
<dbReference type="Pfam" id="PF22920">
    <property type="entry name" value="UvrC_RNaseH"/>
    <property type="match status" value="1"/>
</dbReference>
<dbReference type="Pfam" id="PF08459">
    <property type="entry name" value="UvrC_RNaseH_dom"/>
    <property type="match status" value="1"/>
</dbReference>
<dbReference type="SMART" id="SM00465">
    <property type="entry name" value="GIYc"/>
    <property type="match status" value="1"/>
</dbReference>
<dbReference type="SUPFAM" id="SSF46600">
    <property type="entry name" value="C-terminal UvrC-binding domain of UvrB"/>
    <property type="match status" value="1"/>
</dbReference>
<dbReference type="SUPFAM" id="SSF82771">
    <property type="entry name" value="GIY-YIG endonuclease"/>
    <property type="match status" value="1"/>
</dbReference>
<dbReference type="SUPFAM" id="SSF47781">
    <property type="entry name" value="RuvA domain 2-like"/>
    <property type="match status" value="1"/>
</dbReference>
<dbReference type="PROSITE" id="PS50164">
    <property type="entry name" value="GIY_YIG"/>
    <property type="match status" value="1"/>
</dbReference>
<dbReference type="PROSITE" id="PS50151">
    <property type="entry name" value="UVR"/>
    <property type="match status" value="1"/>
</dbReference>
<dbReference type="PROSITE" id="PS50165">
    <property type="entry name" value="UVRC"/>
    <property type="match status" value="1"/>
</dbReference>
<reference key="1">
    <citation type="submission" date="2007-07" db="EMBL/GenBank/DDBJ databases">
        <title>Complete genome sequence of Campylobacter jejuni subsp doylei 269.97 isolated from human blood.</title>
        <authorList>
            <person name="Fouts D.E."/>
            <person name="Mongodin E.F."/>
            <person name="Puiu D."/>
            <person name="Sebastian Y."/>
            <person name="Miller W.G."/>
            <person name="Mandrell R.E."/>
            <person name="Lastovica A.J."/>
            <person name="Nelson K.E."/>
        </authorList>
    </citation>
    <scope>NUCLEOTIDE SEQUENCE [LARGE SCALE GENOMIC DNA]</scope>
    <source>
        <strain>ATCC BAA-1458 / RM4099 / 269.97</strain>
    </source>
</reference>
<comment type="function">
    <text evidence="1">The UvrABC repair system catalyzes the recognition and processing of DNA lesions. UvrC both incises the 5' and 3' sides of the lesion. The N-terminal half is responsible for the 3' incision and the C-terminal half is responsible for the 5' incision.</text>
</comment>
<comment type="subunit">
    <text evidence="1">Interacts with UvrB in an incision complex.</text>
</comment>
<comment type="subcellular location">
    <subcellularLocation>
        <location evidence="1">Cytoplasm</location>
    </subcellularLocation>
</comment>
<comment type="similarity">
    <text evidence="1">Belongs to the UvrC family.</text>
</comment>
<feature type="chain" id="PRO_1000077766" description="UvrABC system protein C">
    <location>
        <begin position="1"/>
        <end position="600"/>
    </location>
</feature>
<feature type="domain" description="GIY-YIG" evidence="1">
    <location>
        <begin position="15"/>
        <end position="100"/>
    </location>
</feature>
<feature type="domain" description="UVR" evidence="1">
    <location>
        <begin position="203"/>
        <end position="238"/>
    </location>
</feature>
<accession>A7H2D5</accession>
<gene>
    <name evidence="1" type="primary">uvrC</name>
    <name type="ordered locus">JJD26997_0480</name>
</gene>
<organism>
    <name type="scientific">Campylobacter jejuni subsp. doylei (strain ATCC BAA-1458 / RM4099 / 269.97)</name>
    <dbReference type="NCBI Taxonomy" id="360109"/>
    <lineage>
        <taxon>Bacteria</taxon>
        <taxon>Pseudomonadati</taxon>
        <taxon>Campylobacterota</taxon>
        <taxon>Epsilonproteobacteria</taxon>
        <taxon>Campylobacterales</taxon>
        <taxon>Campylobacteraceae</taxon>
        <taxon>Campylobacter</taxon>
    </lineage>
</organism>
<proteinExistence type="inferred from homology"/>
<protein>
    <recommendedName>
        <fullName evidence="1">UvrABC system protein C</fullName>
        <shortName evidence="1">Protein UvrC</shortName>
    </recommendedName>
    <alternativeName>
        <fullName evidence="1">Excinuclease ABC subunit C</fullName>
    </alternativeName>
</protein>
<keyword id="KW-0963">Cytoplasm</keyword>
<keyword id="KW-0227">DNA damage</keyword>
<keyword id="KW-0228">DNA excision</keyword>
<keyword id="KW-0234">DNA repair</keyword>
<keyword id="KW-0267">Excision nuclease</keyword>
<keyword id="KW-0742">SOS response</keyword>
<evidence type="ECO:0000255" key="1">
    <source>
        <dbReference type="HAMAP-Rule" id="MF_00203"/>
    </source>
</evidence>